<feature type="initiator methionine" description="Removed" evidence="1">
    <location>
        <position position="1"/>
    </location>
</feature>
<feature type="chain" id="PRO_0000185878" description="Stringent starvation protein A">
    <location>
        <begin position="2"/>
        <end position="212"/>
    </location>
</feature>
<feature type="domain" description="GST N-terminal">
    <location>
        <begin position="9"/>
        <end position="87"/>
    </location>
</feature>
<feature type="domain" description="GST C-terminal">
    <location>
        <begin position="92"/>
        <end position="209"/>
    </location>
</feature>
<proteinExistence type="inferred from homology"/>
<sequence>MAVAANKRSVMTLFSGPTDIYSHQVRIVLAEKGVSFEIEHVEKDNPPQDLIDLNPNQSVPTLVDRELTLWESRIIMEYLDERFPHPPLMPVYPVARGESRLYMHRIEKDWYTLMNTIINGSASEADAARKQLREELLAIAPVFGQKPYFLSDEFSLVDCYLAPLLWRLPQLGIEFSGPGAKELKGYMTRVFERDSFLASLTEAEREMRLGRS</sequence>
<keyword id="KW-1185">Reference proteome</keyword>
<dbReference type="EMBL" id="AE014075">
    <property type="protein sequence ID" value="AAN82422.1"/>
    <property type="molecule type" value="Genomic_DNA"/>
</dbReference>
<dbReference type="RefSeq" id="WP_000257293.1">
    <property type="nucleotide sequence ID" value="NZ_CP051263.1"/>
</dbReference>
<dbReference type="SMR" id="P0ACA4"/>
<dbReference type="STRING" id="199310.c3982"/>
<dbReference type="GeneID" id="89518065"/>
<dbReference type="KEGG" id="ecc:c3982"/>
<dbReference type="eggNOG" id="COG0625">
    <property type="taxonomic scope" value="Bacteria"/>
</dbReference>
<dbReference type="HOGENOM" id="CLU_011226_9_3_6"/>
<dbReference type="BioCyc" id="ECOL199310:C3982-MONOMER"/>
<dbReference type="Proteomes" id="UP000001410">
    <property type="component" value="Chromosome"/>
</dbReference>
<dbReference type="GO" id="GO:0005737">
    <property type="term" value="C:cytoplasm"/>
    <property type="evidence" value="ECO:0007669"/>
    <property type="project" value="TreeGrafter"/>
</dbReference>
<dbReference type="CDD" id="cd03186">
    <property type="entry name" value="GST_C_SspA"/>
    <property type="match status" value="1"/>
</dbReference>
<dbReference type="CDD" id="cd03059">
    <property type="entry name" value="GST_N_SspA"/>
    <property type="match status" value="1"/>
</dbReference>
<dbReference type="FunFam" id="1.20.1050.10:FF:000002">
    <property type="entry name" value="Stringent starvation protein A"/>
    <property type="match status" value="1"/>
</dbReference>
<dbReference type="Gene3D" id="1.20.1050.10">
    <property type="match status" value="1"/>
</dbReference>
<dbReference type="Gene3D" id="3.40.30.10">
    <property type="entry name" value="Glutaredoxin"/>
    <property type="match status" value="1"/>
</dbReference>
<dbReference type="InterPro" id="IPR010987">
    <property type="entry name" value="Glutathione-S-Trfase_C-like"/>
</dbReference>
<dbReference type="InterPro" id="IPR036282">
    <property type="entry name" value="Glutathione-S-Trfase_C_sf"/>
</dbReference>
<dbReference type="InterPro" id="IPR040079">
    <property type="entry name" value="Glutathione_S-Trfase"/>
</dbReference>
<dbReference type="InterPro" id="IPR004045">
    <property type="entry name" value="Glutathione_S-Trfase_N"/>
</dbReference>
<dbReference type="InterPro" id="IPR004046">
    <property type="entry name" value="GST_C"/>
</dbReference>
<dbReference type="InterPro" id="IPR050983">
    <property type="entry name" value="GST_Omega/HSP26"/>
</dbReference>
<dbReference type="InterPro" id="IPR034342">
    <property type="entry name" value="SspA_C"/>
</dbReference>
<dbReference type="InterPro" id="IPR034341">
    <property type="entry name" value="SspA_N"/>
</dbReference>
<dbReference type="InterPro" id="IPR036249">
    <property type="entry name" value="Thioredoxin-like_sf"/>
</dbReference>
<dbReference type="NCBIfam" id="NF007016">
    <property type="entry name" value="PRK09481.1"/>
    <property type="match status" value="1"/>
</dbReference>
<dbReference type="PANTHER" id="PTHR43968">
    <property type="match status" value="1"/>
</dbReference>
<dbReference type="PANTHER" id="PTHR43968:SF6">
    <property type="entry name" value="GLUTATHIONE S-TRANSFERASE OMEGA"/>
    <property type="match status" value="1"/>
</dbReference>
<dbReference type="Pfam" id="PF00043">
    <property type="entry name" value="GST_C"/>
    <property type="match status" value="1"/>
</dbReference>
<dbReference type="Pfam" id="PF02798">
    <property type="entry name" value="GST_N"/>
    <property type="match status" value="1"/>
</dbReference>
<dbReference type="SFLD" id="SFLDS00019">
    <property type="entry name" value="Glutathione_Transferase_(cytos"/>
    <property type="match status" value="1"/>
</dbReference>
<dbReference type="SFLD" id="SFLDG00358">
    <property type="entry name" value="Main_(cytGST)"/>
    <property type="match status" value="1"/>
</dbReference>
<dbReference type="SUPFAM" id="SSF47616">
    <property type="entry name" value="GST C-terminal domain-like"/>
    <property type="match status" value="1"/>
</dbReference>
<dbReference type="SUPFAM" id="SSF52833">
    <property type="entry name" value="Thioredoxin-like"/>
    <property type="match status" value="1"/>
</dbReference>
<dbReference type="PROSITE" id="PS50405">
    <property type="entry name" value="GST_CTER"/>
    <property type="match status" value="1"/>
</dbReference>
<dbReference type="PROSITE" id="PS50404">
    <property type="entry name" value="GST_NTER"/>
    <property type="match status" value="1"/>
</dbReference>
<name>SSPA_ECOL6</name>
<organism>
    <name type="scientific">Escherichia coli O6:H1 (strain CFT073 / ATCC 700928 / UPEC)</name>
    <dbReference type="NCBI Taxonomy" id="199310"/>
    <lineage>
        <taxon>Bacteria</taxon>
        <taxon>Pseudomonadati</taxon>
        <taxon>Pseudomonadota</taxon>
        <taxon>Gammaproteobacteria</taxon>
        <taxon>Enterobacterales</taxon>
        <taxon>Enterobacteriaceae</taxon>
        <taxon>Escherichia</taxon>
    </lineage>
</organism>
<evidence type="ECO:0000250" key="1"/>
<evidence type="ECO:0000305" key="2"/>
<gene>
    <name type="primary">sspA</name>
    <name type="ordered locus">c3982</name>
</gene>
<accession>P0ACA4</accession>
<accession>P05838</accession>
<reference key="1">
    <citation type="journal article" date="2002" name="Proc. Natl. Acad. Sci. U.S.A.">
        <title>Extensive mosaic structure revealed by the complete genome sequence of uropathogenic Escherichia coli.</title>
        <authorList>
            <person name="Welch R.A."/>
            <person name="Burland V."/>
            <person name="Plunkett G. III"/>
            <person name="Redford P."/>
            <person name="Roesch P."/>
            <person name="Rasko D."/>
            <person name="Buckles E.L."/>
            <person name="Liou S.-R."/>
            <person name="Boutin A."/>
            <person name="Hackett J."/>
            <person name="Stroud D."/>
            <person name="Mayhew G.F."/>
            <person name="Rose D.J."/>
            <person name="Zhou S."/>
            <person name="Schwartz D.C."/>
            <person name="Perna N.T."/>
            <person name="Mobley H.L.T."/>
            <person name="Donnenberg M.S."/>
            <person name="Blattner F.R."/>
        </authorList>
    </citation>
    <scope>NUCLEOTIDE SEQUENCE [LARGE SCALE GENOMIC DNA]</scope>
    <source>
        <strain>CFT073 / ATCC 700928 / UPEC</strain>
    </source>
</reference>
<comment type="function">
    <text evidence="1">Forms an equimolar complex with the RNA polymerase holoenzyme (RNAP) but not with the core enzyme.</text>
</comment>
<comment type="similarity">
    <text evidence="2">Belongs to the GST superfamily. HSP26 family.</text>
</comment>
<protein>
    <recommendedName>
        <fullName>Stringent starvation protein A</fullName>
    </recommendedName>
</protein>